<gene>
    <name evidence="1" type="primary">gpsA</name>
    <name type="ordered locus">Ava_1163</name>
</gene>
<reference key="1">
    <citation type="journal article" date="2014" name="Stand. Genomic Sci.">
        <title>Complete genome sequence of Anabaena variabilis ATCC 29413.</title>
        <authorList>
            <person name="Thiel T."/>
            <person name="Pratte B.S."/>
            <person name="Zhong J."/>
            <person name="Goodwin L."/>
            <person name="Copeland A."/>
            <person name="Lucas S."/>
            <person name="Han C."/>
            <person name="Pitluck S."/>
            <person name="Land M.L."/>
            <person name="Kyrpides N.C."/>
            <person name="Woyke T."/>
        </authorList>
    </citation>
    <scope>NUCLEOTIDE SEQUENCE [LARGE SCALE GENOMIC DNA]</scope>
    <source>
        <strain>ATCC 29413 / PCC 7937</strain>
    </source>
</reference>
<comment type="function">
    <text evidence="1">Catalyzes the reduction of the glycolytic intermediate dihydroxyacetone phosphate (DHAP) to sn-glycerol 3-phosphate (G3P), the key precursor for phospholipid synthesis.</text>
</comment>
<comment type="catalytic activity">
    <reaction evidence="1">
        <text>sn-glycerol 3-phosphate + NAD(+) = dihydroxyacetone phosphate + NADH + H(+)</text>
        <dbReference type="Rhea" id="RHEA:11092"/>
        <dbReference type="ChEBI" id="CHEBI:15378"/>
        <dbReference type="ChEBI" id="CHEBI:57540"/>
        <dbReference type="ChEBI" id="CHEBI:57597"/>
        <dbReference type="ChEBI" id="CHEBI:57642"/>
        <dbReference type="ChEBI" id="CHEBI:57945"/>
        <dbReference type="EC" id="1.1.1.94"/>
    </reaction>
    <physiologicalReaction direction="right-to-left" evidence="1">
        <dbReference type="Rhea" id="RHEA:11094"/>
    </physiologicalReaction>
</comment>
<comment type="catalytic activity">
    <reaction evidence="1">
        <text>sn-glycerol 3-phosphate + NADP(+) = dihydroxyacetone phosphate + NADPH + H(+)</text>
        <dbReference type="Rhea" id="RHEA:11096"/>
        <dbReference type="ChEBI" id="CHEBI:15378"/>
        <dbReference type="ChEBI" id="CHEBI:57597"/>
        <dbReference type="ChEBI" id="CHEBI:57642"/>
        <dbReference type="ChEBI" id="CHEBI:57783"/>
        <dbReference type="ChEBI" id="CHEBI:58349"/>
        <dbReference type="EC" id="1.1.1.94"/>
    </reaction>
    <physiologicalReaction direction="right-to-left" evidence="1">
        <dbReference type="Rhea" id="RHEA:11098"/>
    </physiologicalReaction>
</comment>
<comment type="pathway">
    <text evidence="1">Membrane lipid metabolism; glycerophospholipid metabolism.</text>
</comment>
<comment type="subcellular location">
    <subcellularLocation>
        <location evidence="1">Cytoplasm</location>
    </subcellularLocation>
</comment>
<comment type="similarity">
    <text evidence="1">Belongs to the NAD-dependent glycerol-3-phosphate dehydrogenase family.</text>
</comment>
<sequence length="307" mass="32723">MQETTILILGAGAWGASLANLALANGHRVRVWSRRGTETLAALLEDVDIILSAISMKGVREVASQIQSLTPSPETIFVTATKGLEPETIYTPSQIWQSCFPNHPVVVLSGPNLSKEIDQSLPAATVVASRIATAAATVQLAFSSSRFRVYTNPDPIGVELGGTLKNVIAIASGVCDGLHLGTNAKAALVTRGLTEMVRIGNCWGAKTETFYGLSGLGDLLATCNSPLSRNYQVGYQLAGGQTLAQILAKLPGTAEGVNTCQVLVQLARQQNIVIPITEQVYRLLQGEVTPQQALDELMLRDIKPEYN</sequence>
<evidence type="ECO:0000255" key="1">
    <source>
        <dbReference type="HAMAP-Rule" id="MF_00394"/>
    </source>
</evidence>
<feature type="chain" id="PRO_0000255276" description="Glycerol-3-phosphate dehydrogenase [NAD(P)+]">
    <location>
        <begin position="1"/>
        <end position="307"/>
    </location>
</feature>
<feature type="active site" description="Proton acceptor" evidence="1">
    <location>
        <position position="165"/>
    </location>
</feature>
<feature type="binding site" evidence="1">
    <location>
        <position position="14"/>
    </location>
    <ligand>
        <name>NADPH</name>
        <dbReference type="ChEBI" id="CHEBI:57783"/>
    </ligand>
</feature>
<feature type="binding site" evidence="1">
    <location>
        <position position="34"/>
    </location>
    <ligand>
        <name>NADPH</name>
        <dbReference type="ChEBI" id="CHEBI:57783"/>
    </ligand>
</feature>
<feature type="binding site" evidence="1">
    <location>
        <position position="35"/>
    </location>
    <ligand>
        <name>NADPH</name>
        <dbReference type="ChEBI" id="CHEBI:57783"/>
    </ligand>
</feature>
<feature type="binding site" evidence="1">
    <location>
        <position position="82"/>
    </location>
    <ligand>
        <name>NADPH</name>
        <dbReference type="ChEBI" id="CHEBI:57783"/>
    </ligand>
</feature>
<feature type="binding site" evidence="1">
    <location>
        <position position="82"/>
    </location>
    <ligand>
        <name>sn-glycerol 3-phosphate</name>
        <dbReference type="ChEBI" id="CHEBI:57597"/>
    </ligand>
</feature>
<feature type="binding site" evidence="1">
    <location>
        <position position="110"/>
    </location>
    <ligand>
        <name>sn-glycerol 3-phosphate</name>
        <dbReference type="ChEBI" id="CHEBI:57597"/>
    </ligand>
</feature>
<feature type="binding site" evidence="1">
    <location>
        <position position="114"/>
    </location>
    <ligand>
        <name>NADPH</name>
        <dbReference type="ChEBI" id="CHEBI:57783"/>
    </ligand>
</feature>
<feature type="binding site" evidence="1">
    <location>
        <position position="165"/>
    </location>
    <ligand>
        <name>sn-glycerol 3-phosphate</name>
        <dbReference type="ChEBI" id="CHEBI:57597"/>
    </ligand>
</feature>
<feature type="binding site" evidence="1">
    <location>
        <position position="218"/>
    </location>
    <ligand>
        <name>sn-glycerol 3-phosphate</name>
        <dbReference type="ChEBI" id="CHEBI:57597"/>
    </ligand>
</feature>
<feature type="binding site" evidence="1">
    <location>
        <position position="228"/>
    </location>
    <ligand>
        <name>sn-glycerol 3-phosphate</name>
        <dbReference type="ChEBI" id="CHEBI:57597"/>
    </ligand>
</feature>
<feature type="binding site" evidence="1">
    <location>
        <position position="229"/>
    </location>
    <ligand>
        <name>NADPH</name>
        <dbReference type="ChEBI" id="CHEBI:57783"/>
    </ligand>
</feature>
<feature type="binding site" evidence="1">
    <location>
        <position position="229"/>
    </location>
    <ligand>
        <name>sn-glycerol 3-phosphate</name>
        <dbReference type="ChEBI" id="CHEBI:57597"/>
    </ligand>
</feature>
<feature type="binding site" evidence="1">
    <location>
        <position position="230"/>
    </location>
    <ligand>
        <name>sn-glycerol 3-phosphate</name>
        <dbReference type="ChEBI" id="CHEBI:57597"/>
    </ligand>
</feature>
<feature type="binding site" evidence="1">
    <location>
        <position position="255"/>
    </location>
    <ligand>
        <name>NADPH</name>
        <dbReference type="ChEBI" id="CHEBI:57783"/>
    </ligand>
</feature>
<organism>
    <name type="scientific">Trichormus variabilis (strain ATCC 29413 / PCC 7937)</name>
    <name type="common">Anabaena variabilis</name>
    <dbReference type="NCBI Taxonomy" id="240292"/>
    <lineage>
        <taxon>Bacteria</taxon>
        <taxon>Bacillati</taxon>
        <taxon>Cyanobacteriota</taxon>
        <taxon>Cyanophyceae</taxon>
        <taxon>Nostocales</taxon>
        <taxon>Nostocaceae</taxon>
        <taxon>Trichormus</taxon>
    </lineage>
</organism>
<keyword id="KW-0963">Cytoplasm</keyword>
<keyword id="KW-0444">Lipid biosynthesis</keyword>
<keyword id="KW-0443">Lipid metabolism</keyword>
<keyword id="KW-0520">NAD</keyword>
<keyword id="KW-0521">NADP</keyword>
<keyword id="KW-0547">Nucleotide-binding</keyword>
<keyword id="KW-0560">Oxidoreductase</keyword>
<keyword id="KW-0594">Phospholipid biosynthesis</keyword>
<keyword id="KW-1208">Phospholipid metabolism</keyword>
<proteinExistence type="inferred from homology"/>
<name>GPDA_TRIV2</name>
<protein>
    <recommendedName>
        <fullName evidence="1">Glycerol-3-phosphate dehydrogenase [NAD(P)+]</fullName>
        <ecNumber evidence="1">1.1.1.94</ecNumber>
    </recommendedName>
    <alternativeName>
        <fullName evidence="1">NAD(P)(+)-dependent glycerol-3-phosphate dehydrogenase</fullName>
    </alternativeName>
    <alternativeName>
        <fullName evidence="1">NAD(P)H-dependent dihydroxyacetone-phosphate reductase</fullName>
    </alternativeName>
</protein>
<dbReference type="EC" id="1.1.1.94" evidence="1"/>
<dbReference type="EMBL" id="CP000117">
    <property type="protein sequence ID" value="ABA20787.1"/>
    <property type="molecule type" value="Genomic_DNA"/>
</dbReference>
<dbReference type="SMR" id="Q3MDZ9"/>
<dbReference type="STRING" id="240292.Ava_1163"/>
<dbReference type="KEGG" id="ava:Ava_1163"/>
<dbReference type="eggNOG" id="COG0240">
    <property type="taxonomic scope" value="Bacteria"/>
</dbReference>
<dbReference type="HOGENOM" id="CLU_033449_0_2_3"/>
<dbReference type="UniPathway" id="UPA00940"/>
<dbReference type="Proteomes" id="UP000002533">
    <property type="component" value="Chromosome"/>
</dbReference>
<dbReference type="GO" id="GO:0005829">
    <property type="term" value="C:cytosol"/>
    <property type="evidence" value="ECO:0007669"/>
    <property type="project" value="TreeGrafter"/>
</dbReference>
<dbReference type="GO" id="GO:0047952">
    <property type="term" value="F:glycerol-3-phosphate dehydrogenase [NAD(P)+] activity"/>
    <property type="evidence" value="ECO:0007669"/>
    <property type="project" value="UniProtKB-UniRule"/>
</dbReference>
<dbReference type="GO" id="GO:0051287">
    <property type="term" value="F:NAD binding"/>
    <property type="evidence" value="ECO:0007669"/>
    <property type="project" value="InterPro"/>
</dbReference>
<dbReference type="GO" id="GO:0005975">
    <property type="term" value="P:carbohydrate metabolic process"/>
    <property type="evidence" value="ECO:0007669"/>
    <property type="project" value="InterPro"/>
</dbReference>
<dbReference type="GO" id="GO:0046167">
    <property type="term" value="P:glycerol-3-phosphate biosynthetic process"/>
    <property type="evidence" value="ECO:0007669"/>
    <property type="project" value="UniProtKB-UniRule"/>
</dbReference>
<dbReference type="GO" id="GO:0046168">
    <property type="term" value="P:glycerol-3-phosphate catabolic process"/>
    <property type="evidence" value="ECO:0007669"/>
    <property type="project" value="InterPro"/>
</dbReference>
<dbReference type="GO" id="GO:0006650">
    <property type="term" value="P:glycerophospholipid metabolic process"/>
    <property type="evidence" value="ECO:0007669"/>
    <property type="project" value="UniProtKB-UniRule"/>
</dbReference>
<dbReference type="GO" id="GO:0008654">
    <property type="term" value="P:phospholipid biosynthetic process"/>
    <property type="evidence" value="ECO:0007669"/>
    <property type="project" value="UniProtKB-KW"/>
</dbReference>
<dbReference type="FunFam" id="1.10.1040.10:FF:000001">
    <property type="entry name" value="Glycerol-3-phosphate dehydrogenase [NAD(P)+]"/>
    <property type="match status" value="1"/>
</dbReference>
<dbReference type="FunFam" id="3.40.50.720:FF:001174">
    <property type="entry name" value="Glycerol-3-phosphate dehydrogenase [NAD(P)+]"/>
    <property type="match status" value="1"/>
</dbReference>
<dbReference type="Gene3D" id="1.10.1040.10">
    <property type="entry name" value="N-(1-d-carboxylethyl)-l-norvaline Dehydrogenase, domain 2"/>
    <property type="match status" value="1"/>
</dbReference>
<dbReference type="Gene3D" id="3.40.50.720">
    <property type="entry name" value="NAD(P)-binding Rossmann-like Domain"/>
    <property type="match status" value="2"/>
</dbReference>
<dbReference type="HAMAP" id="MF_00394">
    <property type="entry name" value="NAD_Glyc3P_dehydrog"/>
    <property type="match status" value="1"/>
</dbReference>
<dbReference type="InterPro" id="IPR008927">
    <property type="entry name" value="6-PGluconate_DH-like_C_sf"/>
</dbReference>
<dbReference type="InterPro" id="IPR013328">
    <property type="entry name" value="6PGD_dom2"/>
</dbReference>
<dbReference type="InterPro" id="IPR006168">
    <property type="entry name" value="G3P_DH_NAD-dep"/>
</dbReference>
<dbReference type="InterPro" id="IPR006109">
    <property type="entry name" value="G3P_DH_NAD-dep_C"/>
</dbReference>
<dbReference type="InterPro" id="IPR011128">
    <property type="entry name" value="G3P_DH_NAD-dep_N"/>
</dbReference>
<dbReference type="InterPro" id="IPR036291">
    <property type="entry name" value="NAD(P)-bd_dom_sf"/>
</dbReference>
<dbReference type="NCBIfam" id="NF000940">
    <property type="entry name" value="PRK00094.1-2"/>
    <property type="match status" value="1"/>
</dbReference>
<dbReference type="NCBIfam" id="NF000942">
    <property type="entry name" value="PRK00094.1-4"/>
    <property type="match status" value="1"/>
</dbReference>
<dbReference type="NCBIfam" id="NF011212">
    <property type="entry name" value="PRK14619.1"/>
    <property type="match status" value="1"/>
</dbReference>
<dbReference type="PANTHER" id="PTHR11728">
    <property type="entry name" value="GLYCEROL-3-PHOSPHATE DEHYDROGENASE"/>
    <property type="match status" value="1"/>
</dbReference>
<dbReference type="PANTHER" id="PTHR11728:SF1">
    <property type="entry name" value="GLYCEROL-3-PHOSPHATE DEHYDROGENASE [NAD(+)] 2, CHLOROPLASTIC"/>
    <property type="match status" value="1"/>
</dbReference>
<dbReference type="Pfam" id="PF07479">
    <property type="entry name" value="NAD_Gly3P_dh_C"/>
    <property type="match status" value="1"/>
</dbReference>
<dbReference type="Pfam" id="PF01210">
    <property type="entry name" value="NAD_Gly3P_dh_N"/>
    <property type="match status" value="2"/>
</dbReference>
<dbReference type="PIRSF" id="PIRSF000114">
    <property type="entry name" value="Glycerol-3-P_dh"/>
    <property type="match status" value="1"/>
</dbReference>
<dbReference type="SUPFAM" id="SSF48179">
    <property type="entry name" value="6-phosphogluconate dehydrogenase C-terminal domain-like"/>
    <property type="match status" value="1"/>
</dbReference>
<dbReference type="SUPFAM" id="SSF51735">
    <property type="entry name" value="NAD(P)-binding Rossmann-fold domains"/>
    <property type="match status" value="1"/>
</dbReference>
<dbReference type="PROSITE" id="PS00957">
    <property type="entry name" value="NAD_G3PDH"/>
    <property type="match status" value="1"/>
</dbReference>
<accession>Q3MDZ9</accession>